<proteinExistence type="inferred from homology"/>
<dbReference type="EMBL" id="CU633749">
    <property type="protein sequence ID" value="CAQ70846.1"/>
    <property type="molecule type" value="Genomic_DNA"/>
</dbReference>
<dbReference type="RefSeq" id="WP_008642961.1">
    <property type="nucleotide sequence ID" value="NC_010528.1"/>
</dbReference>
<dbReference type="SMR" id="B3R7E6"/>
<dbReference type="GeneID" id="60826623"/>
<dbReference type="KEGG" id="cti:RALTA_A2921"/>
<dbReference type="eggNOG" id="COG0099">
    <property type="taxonomic scope" value="Bacteria"/>
</dbReference>
<dbReference type="HOGENOM" id="CLU_103849_1_2_4"/>
<dbReference type="BioCyc" id="CTAI977880:RALTA_RS14240-MONOMER"/>
<dbReference type="Proteomes" id="UP000001692">
    <property type="component" value="Chromosome 1"/>
</dbReference>
<dbReference type="GO" id="GO:0005829">
    <property type="term" value="C:cytosol"/>
    <property type="evidence" value="ECO:0007669"/>
    <property type="project" value="TreeGrafter"/>
</dbReference>
<dbReference type="GO" id="GO:0015935">
    <property type="term" value="C:small ribosomal subunit"/>
    <property type="evidence" value="ECO:0007669"/>
    <property type="project" value="TreeGrafter"/>
</dbReference>
<dbReference type="GO" id="GO:0019843">
    <property type="term" value="F:rRNA binding"/>
    <property type="evidence" value="ECO:0007669"/>
    <property type="project" value="UniProtKB-UniRule"/>
</dbReference>
<dbReference type="GO" id="GO:0003735">
    <property type="term" value="F:structural constituent of ribosome"/>
    <property type="evidence" value="ECO:0007669"/>
    <property type="project" value="InterPro"/>
</dbReference>
<dbReference type="GO" id="GO:0000049">
    <property type="term" value="F:tRNA binding"/>
    <property type="evidence" value="ECO:0007669"/>
    <property type="project" value="UniProtKB-UniRule"/>
</dbReference>
<dbReference type="GO" id="GO:0006412">
    <property type="term" value="P:translation"/>
    <property type="evidence" value="ECO:0007669"/>
    <property type="project" value="UniProtKB-UniRule"/>
</dbReference>
<dbReference type="FunFam" id="1.10.8.50:FF:000001">
    <property type="entry name" value="30S ribosomal protein S13"/>
    <property type="match status" value="1"/>
</dbReference>
<dbReference type="FunFam" id="4.10.910.10:FF:000001">
    <property type="entry name" value="30S ribosomal protein S13"/>
    <property type="match status" value="1"/>
</dbReference>
<dbReference type="Gene3D" id="1.10.8.50">
    <property type="match status" value="1"/>
</dbReference>
<dbReference type="Gene3D" id="4.10.910.10">
    <property type="entry name" value="30s ribosomal protein s13, domain 2"/>
    <property type="match status" value="1"/>
</dbReference>
<dbReference type="HAMAP" id="MF_01315">
    <property type="entry name" value="Ribosomal_uS13"/>
    <property type="match status" value="1"/>
</dbReference>
<dbReference type="InterPro" id="IPR027437">
    <property type="entry name" value="Rbsml_uS13_C"/>
</dbReference>
<dbReference type="InterPro" id="IPR001892">
    <property type="entry name" value="Ribosomal_uS13"/>
</dbReference>
<dbReference type="InterPro" id="IPR010979">
    <property type="entry name" value="Ribosomal_uS13-like_H2TH"/>
</dbReference>
<dbReference type="InterPro" id="IPR019980">
    <property type="entry name" value="Ribosomal_uS13_bac-type"/>
</dbReference>
<dbReference type="InterPro" id="IPR018269">
    <property type="entry name" value="Ribosomal_uS13_CS"/>
</dbReference>
<dbReference type="NCBIfam" id="TIGR03631">
    <property type="entry name" value="uS13_bact"/>
    <property type="match status" value="1"/>
</dbReference>
<dbReference type="PANTHER" id="PTHR10871">
    <property type="entry name" value="30S RIBOSOMAL PROTEIN S13/40S RIBOSOMAL PROTEIN S18"/>
    <property type="match status" value="1"/>
</dbReference>
<dbReference type="PANTHER" id="PTHR10871:SF1">
    <property type="entry name" value="SMALL RIBOSOMAL SUBUNIT PROTEIN US13M"/>
    <property type="match status" value="1"/>
</dbReference>
<dbReference type="Pfam" id="PF00416">
    <property type="entry name" value="Ribosomal_S13"/>
    <property type="match status" value="2"/>
</dbReference>
<dbReference type="PIRSF" id="PIRSF002134">
    <property type="entry name" value="Ribosomal_S13"/>
    <property type="match status" value="1"/>
</dbReference>
<dbReference type="SUPFAM" id="SSF46946">
    <property type="entry name" value="S13-like H2TH domain"/>
    <property type="match status" value="1"/>
</dbReference>
<dbReference type="PROSITE" id="PS00646">
    <property type="entry name" value="RIBOSOMAL_S13_1"/>
    <property type="match status" value="1"/>
</dbReference>
<dbReference type="PROSITE" id="PS50159">
    <property type="entry name" value="RIBOSOMAL_S13_2"/>
    <property type="match status" value="1"/>
</dbReference>
<feature type="chain" id="PRO_1000141250" description="Small ribosomal subunit protein uS13">
    <location>
        <begin position="1"/>
        <end position="121"/>
    </location>
</feature>
<feature type="region of interest" description="Disordered" evidence="2">
    <location>
        <begin position="91"/>
        <end position="121"/>
    </location>
</feature>
<evidence type="ECO:0000255" key="1">
    <source>
        <dbReference type="HAMAP-Rule" id="MF_01315"/>
    </source>
</evidence>
<evidence type="ECO:0000256" key="2">
    <source>
        <dbReference type="SAM" id="MobiDB-lite"/>
    </source>
</evidence>
<evidence type="ECO:0000305" key="3"/>
<accession>B3R7E6</accession>
<sequence>MARIAGVNIPNHKHTEIGLTAIYGIGRSRARKICEATGVPFDKKVKDLTDADLEKLRDEVGKVTVEGDLRRETTMNIKRLMDLGCYRGMRHRKGLPMRGQRTRTNARTRKGPRKAGVALKK</sequence>
<reference key="1">
    <citation type="journal article" date="2008" name="Genome Res.">
        <title>Genome sequence of the beta-rhizobium Cupriavidus taiwanensis and comparative genomics of rhizobia.</title>
        <authorList>
            <person name="Amadou C."/>
            <person name="Pascal G."/>
            <person name="Mangenot S."/>
            <person name="Glew M."/>
            <person name="Bontemps C."/>
            <person name="Capela D."/>
            <person name="Carrere S."/>
            <person name="Cruveiller S."/>
            <person name="Dossat C."/>
            <person name="Lajus A."/>
            <person name="Marchetti M."/>
            <person name="Poinsot V."/>
            <person name="Rouy Z."/>
            <person name="Servin B."/>
            <person name="Saad M."/>
            <person name="Schenowitz C."/>
            <person name="Barbe V."/>
            <person name="Batut J."/>
            <person name="Medigue C."/>
            <person name="Masson-Boivin C."/>
        </authorList>
    </citation>
    <scope>NUCLEOTIDE SEQUENCE [LARGE SCALE GENOMIC DNA]</scope>
    <source>
        <strain>DSM 17343 / BCRC 17206 / CCUG 44338 / CIP 107171 / LMG 19424 / R1</strain>
    </source>
</reference>
<protein>
    <recommendedName>
        <fullName evidence="1">Small ribosomal subunit protein uS13</fullName>
    </recommendedName>
    <alternativeName>
        <fullName evidence="3">30S ribosomal protein S13</fullName>
    </alternativeName>
</protein>
<organism>
    <name type="scientific">Cupriavidus taiwanensis (strain DSM 17343 / BCRC 17206 / CCUG 44338 / CIP 107171 / LMG 19424 / R1)</name>
    <name type="common">Ralstonia taiwanensis (strain LMG 19424)</name>
    <dbReference type="NCBI Taxonomy" id="977880"/>
    <lineage>
        <taxon>Bacteria</taxon>
        <taxon>Pseudomonadati</taxon>
        <taxon>Pseudomonadota</taxon>
        <taxon>Betaproteobacteria</taxon>
        <taxon>Burkholderiales</taxon>
        <taxon>Burkholderiaceae</taxon>
        <taxon>Cupriavidus</taxon>
    </lineage>
</organism>
<name>RS13_CUPTR</name>
<keyword id="KW-0687">Ribonucleoprotein</keyword>
<keyword id="KW-0689">Ribosomal protein</keyword>
<keyword id="KW-0694">RNA-binding</keyword>
<keyword id="KW-0699">rRNA-binding</keyword>
<keyword id="KW-0820">tRNA-binding</keyword>
<gene>
    <name evidence="1" type="primary">rpsM</name>
    <name type="ordered locus">RALTA_A2921</name>
</gene>
<comment type="function">
    <text evidence="1">Located at the top of the head of the 30S subunit, it contacts several helices of the 16S rRNA. In the 70S ribosome it contacts the 23S rRNA (bridge B1a) and protein L5 of the 50S subunit (bridge B1b), connecting the 2 subunits; these bridges are implicated in subunit movement. Contacts the tRNAs in the A and P-sites.</text>
</comment>
<comment type="subunit">
    <text evidence="1">Part of the 30S ribosomal subunit. Forms a loose heterodimer with protein S19. Forms two bridges to the 50S subunit in the 70S ribosome.</text>
</comment>
<comment type="similarity">
    <text evidence="1">Belongs to the universal ribosomal protein uS13 family.</text>
</comment>